<comment type="function">
    <text evidence="2 6">Structural protein involved in the envelopment of mature virion (MV) to form the wrapped virion (WV). The wrapping consists of the addition of Golgi membranes to the mature virion. Participates in mature virion (MV) movement within the infected cell. May play an indirect role in MV-cell fusion.</text>
</comment>
<comment type="subunit">
    <text evidence="3 4">Homohexamers, covalently linked. Interacts with OPG144 and OPG153.</text>
</comment>
<comment type="subcellular location">
    <subcellularLocation>
        <location>Virion</location>
    </subcellularLocation>
    <text>Located to the mature virion membrane via interaction with protein OPG144.</text>
</comment>
<comment type="similarity">
    <text evidence="7">Belongs to the orthopoxvirus OPG154 protein family.</text>
</comment>
<gene>
    <name type="primary">OPG154</name>
    <name type="ordered locus">VACWR150</name>
    <name type="ORF">A27L</name>
</gene>
<reference key="1">
    <citation type="journal article" date="1991" name="J. Biol. Chem.">
        <title>Identification, sequence, and expression of the gene encoding a Mr 35,000 subunit of the vaccinia virus DNA-dependent RNA polymerase.</title>
        <authorList>
            <person name="Amegadzie B.Y."/>
            <person name="Ahn B.-Y."/>
            <person name="Moss B."/>
        </authorList>
    </citation>
    <scope>NUCLEOTIDE SEQUENCE [GENOMIC DNA]</scope>
</reference>
<reference key="2">
    <citation type="journal article" date="1987" name="J. Virol.">
        <title>Mapping and nucleotide sequence of the vaccinia virus gene that encodes a 14-kilodalton fusion protein.</title>
        <authorList>
            <person name="Rodriguez J.F."/>
            <person name="Esteban M."/>
        </authorList>
    </citation>
    <scope>NUCLEOTIDE SEQUENCE [GENOMIC DNA]</scope>
</reference>
<reference key="3">
    <citation type="submission" date="2003-02" db="EMBL/GenBank/DDBJ databases">
        <title>Sequencing of the coding region of Vaccinia-WR to an average 9-fold redundancy and an error rate of 0.16/10kb.</title>
        <authorList>
            <person name="Esposito J.J."/>
            <person name="Frace A.M."/>
            <person name="Sammons S.A."/>
            <person name="Olsen-Rasmussen M."/>
            <person name="Osborne J."/>
            <person name="Wohlhueter R."/>
        </authorList>
    </citation>
    <scope>NUCLEOTIDE SEQUENCE [LARGE SCALE GENOMIC DNA]</scope>
</reference>
<reference key="4">
    <citation type="journal article" date="1987" name="J. Virol.">
        <title>A 14,000-Mr envelope protein of vaccinia virus is involved in cell fusion and forms covalently linked trimers.</title>
        <authorList>
            <person name="Rodriguez J.F."/>
            <person name="Paez E."/>
            <person name="Esteban M."/>
        </authorList>
    </citation>
    <scope>FUNCTION</scope>
</reference>
<reference key="5">
    <citation type="journal article" date="2000" name="J. Gen. Virol.">
        <title>The vaccinia virus A27L protein is needed for the microtubule-dependent transport of intracellular mature virus particles.</title>
        <authorList>
            <person name="Sanderson C.M."/>
            <person name="Hollinshead M."/>
            <person name="Smith G.L."/>
        </authorList>
    </citation>
    <scope>FUNCTION</scope>
</reference>
<reference key="6">
    <citation type="journal article" date="2005" name="J. Mol. Biol.">
        <title>The oligomeric structure of vaccinia viral envelope protein A27L is essential for binding to heparin and heparan sulfates on cell surfaces: a structural and functional approach using site-specific mutagenesis.</title>
        <authorList>
            <person name="Ho Y."/>
            <person name="Hsiao J.C."/>
            <person name="Yang M.H."/>
            <person name="Chung C.S."/>
            <person name="Peng Y.C."/>
            <person name="Lin T.H."/>
            <person name="Chang W."/>
            <person name="Tzou D.L."/>
        </authorList>
    </citation>
    <scope>SUBUNIT</scope>
    <scope>MUTAGENESIS OF LEU-51 AND LEU-54</scope>
</reference>
<reference key="7">
    <citation type="journal article" date="2006" name="Virol. J.">
        <title>Pox proteomics: mass spectrometry analysis and identification of Vaccinia virion proteins.</title>
        <authorList>
            <person name="Yoder J.D."/>
            <person name="Chen T.S."/>
            <person name="Gagnier C.R."/>
            <person name="Vemulapalli S."/>
            <person name="Maier C.S."/>
            <person name="Hruby D.E."/>
        </authorList>
    </citation>
    <scope>IDENTIFICATION BY MASS SPECTROMETRY</scope>
</reference>
<reference key="8">
    <citation type="journal article" date="2008" name="J. Virol.">
        <title>Vaccinia virus A26 and A27 proteins form a stable complex tethered to mature virions by association with the A17 transmembrane protein.</title>
        <authorList>
            <person name="Howard A.R."/>
            <person name="Senkevich T.G."/>
            <person name="Moss B."/>
        </authorList>
    </citation>
    <scope>INTERACTION WITH OPG144 AND OPG153</scope>
</reference>
<reference key="9">
    <citation type="journal article" date="2009" name="J. Virol.">
        <title>Disulfide bond formation at the C termini of vaccinia virus A26 and A27 proteins does not require viral redox enzymes and suppresses glycosaminoglycan-mediated cell fusion.</title>
        <authorList>
            <person name="Ching Y.C."/>
            <person name="Chung C.S."/>
            <person name="Huang C.Y."/>
            <person name="Hsia Y."/>
            <person name="Tang Y.L."/>
            <person name="Chang W."/>
        </authorList>
    </citation>
    <scope>DISULFIDE BONDS</scope>
</reference>
<organism>
    <name type="scientific">Vaccinia virus (strain Western Reserve)</name>
    <name type="common">VACV</name>
    <name type="synonym">Vaccinia virus (strain WR)</name>
    <dbReference type="NCBI Taxonomy" id="10254"/>
    <lineage>
        <taxon>Viruses</taxon>
        <taxon>Varidnaviria</taxon>
        <taxon>Bamfordvirae</taxon>
        <taxon>Nucleocytoviricota</taxon>
        <taxon>Pokkesviricetes</taxon>
        <taxon>Chitovirales</taxon>
        <taxon>Poxviridae</taxon>
        <taxon>Chordopoxvirinae</taxon>
        <taxon>Orthopoxvirus</taxon>
        <taxon>Vaccinia virus</taxon>
    </lineage>
</organism>
<name>PG154_VACCW</name>
<sequence>MDGTLFPGDDDLAIPATEFFSTKAAKKPEAKREAIVKADEDDNEETLKQRLTNLEKKITNVTTKFEQIEKCCKRNDEVLFRLENHAETLRAAMISLAKKIDVQTGRRPYE</sequence>
<feature type="chain" id="PRO_0000099212" description="Protein OPG154">
    <location>
        <begin position="1"/>
        <end position="110"/>
    </location>
</feature>
<feature type="coiled-coil region" evidence="1">
    <location>
        <begin position="36"/>
        <end position="101"/>
    </location>
</feature>
<feature type="disulfide bond" description="Interchain (with C-441 in A26)" evidence="5">
    <location>
        <position position="71"/>
    </location>
</feature>
<feature type="disulfide bond" description="Interchain (with C-442 in A26)" evidence="5">
    <location>
        <position position="72"/>
    </location>
</feature>
<feature type="mutagenesis site" description="Forms only tetramers, no hexamer." evidence="3">
    <original>L</original>
    <variation>A</variation>
    <location>
        <position position="51"/>
    </location>
</feature>
<feature type="mutagenesis site" description="Forms more tetramers than hexamers." evidence="3">
    <original>L</original>
    <variation>A</variation>
    <location>
        <position position="54"/>
    </location>
</feature>
<feature type="sequence conflict" description="In Ref. 1; AAA48324 and 3; CAA40577." evidence="7" ref="1 3">
    <original>EA</original>
    <variation>DR</variation>
    <location>
        <begin position="29"/>
        <end position="30"/>
    </location>
</feature>
<feature type="sequence conflict" description="In Ref. 1; AAA48324 and 3; CAA40577." evidence="7" ref="1 3">
    <original>A</original>
    <variation>Q</variation>
    <location>
        <position position="34"/>
    </location>
</feature>
<feature type="helix" evidence="8">
    <location>
        <begin position="47"/>
        <end position="83"/>
    </location>
</feature>
<keyword id="KW-0002">3D-structure</keyword>
<keyword id="KW-0175">Coiled coil</keyword>
<keyword id="KW-1015">Disulfide bond</keyword>
<keyword id="KW-0945">Host-virus interaction</keyword>
<keyword id="KW-0597">Phosphoprotein</keyword>
<keyword id="KW-1185">Reference proteome</keyword>
<keyword id="KW-0946">Virion</keyword>
<proteinExistence type="evidence at protein level"/>
<dbReference type="EMBL" id="M61187">
    <property type="protein sequence ID" value="AAA48324.1"/>
    <property type="molecule type" value="Genomic_DNA"/>
</dbReference>
<dbReference type="EMBL" id="M18173">
    <property type="protein sequence ID" value="AAA48248.1"/>
    <property type="molecule type" value="Genomic_DNA"/>
</dbReference>
<dbReference type="EMBL" id="X57318">
    <property type="protein sequence ID" value="CAA40577.1"/>
    <property type="molecule type" value="Genomic_DNA"/>
</dbReference>
<dbReference type="EMBL" id="AY243312">
    <property type="protein sequence ID" value="AAO89429.1"/>
    <property type="molecule type" value="Genomic_DNA"/>
</dbReference>
<dbReference type="PIR" id="A27173">
    <property type="entry name" value="WMVZ14"/>
</dbReference>
<dbReference type="RefSeq" id="YP_233032.1">
    <property type="nucleotide sequence ID" value="NC_006998.1"/>
</dbReference>
<dbReference type="PDB" id="3VOP">
    <property type="method" value="X-ray"/>
    <property type="resolution" value="2.20 A"/>
    <property type="chains" value="A/B/C=21-84"/>
</dbReference>
<dbReference type="PDB" id="5EOQ">
    <property type="method" value="X-ray"/>
    <property type="resolution" value="1.95 A"/>
    <property type="chains" value="A=31-40"/>
</dbReference>
<dbReference type="PDB" id="5EOR">
    <property type="method" value="X-ray"/>
    <property type="resolution" value="2.27 A"/>
    <property type="chains" value="A=101-110"/>
</dbReference>
<dbReference type="PDBsum" id="3VOP"/>
<dbReference type="PDBsum" id="5EOQ"/>
<dbReference type="PDBsum" id="5EOR"/>
<dbReference type="BMRB" id="P11258"/>
<dbReference type="SMR" id="P11258"/>
<dbReference type="ABCD" id="P11258">
    <property type="antibodies" value="5 sequenced antibodies"/>
</dbReference>
<dbReference type="DNASU" id="3707680"/>
<dbReference type="GeneID" id="3707680"/>
<dbReference type="KEGG" id="vg:3707680"/>
<dbReference type="Proteomes" id="UP000000344">
    <property type="component" value="Genome"/>
</dbReference>
<dbReference type="GO" id="GO:0019031">
    <property type="term" value="C:viral envelope"/>
    <property type="evidence" value="ECO:0007669"/>
    <property type="project" value="InterPro"/>
</dbReference>
<dbReference type="GO" id="GO:0019064">
    <property type="term" value="P:fusion of virus membrane with host plasma membrane"/>
    <property type="evidence" value="ECO:0007669"/>
    <property type="project" value="InterPro"/>
</dbReference>
<dbReference type="Gene3D" id="1.20.5.110">
    <property type="match status" value="1"/>
</dbReference>
<dbReference type="InterPro" id="IPR003436">
    <property type="entry name" value="Chordopox_Fusion/A27"/>
</dbReference>
<dbReference type="Pfam" id="PF02346">
    <property type="entry name" value="Vac_Fusion"/>
    <property type="match status" value="1"/>
</dbReference>
<dbReference type="PRINTS" id="PR01847">
    <property type="entry name" value="VIRALFUSION"/>
</dbReference>
<organismHost>
    <name type="scientific">Bos taurus</name>
    <name type="common">Bovine</name>
    <dbReference type="NCBI Taxonomy" id="9913"/>
</organismHost>
<evidence type="ECO:0000255" key="1"/>
<evidence type="ECO:0000269" key="2">
    <source>
    </source>
</evidence>
<evidence type="ECO:0000269" key="3">
    <source>
    </source>
</evidence>
<evidence type="ECO:0000269" key="4">
    <source>
    </source>
</evidence>
<evidence type="ECO:0000269" key="5">
    <source>
    </source>
</evidence>
<evidence type="ECO:0000269" key="6">
    <source>
    </source>
</evidence>
<evidence type="ECO:0000305" key="7"/>
<evidence type="ECO:0007829" key="8">
    <source>
        <dbReference type="PDB" id="3VOP"/>
    </source>
</evidence>
<accession>P11258</accession>
<accession>Q76ZP6</accession>
<protein>
    <recommendedName>
        <fullName>Protein OPG154</fullName>
    </recommendedName>
</protein>